<proteinExistence type="inferred from homology"/>
<gene>
    <name type="ordered locus">Tgr7_0722</name>
</gene>
<organism>
    <name type="scientific">Thioalkalivibrio sulfidiphilus (strain HL-EbGR7)</name>
    <dbReference type="NCBI Taxonomy" id="396588"/>
    <lineage>
        <taxon>Bacteria</taxon>
        <taxon>Pseudomonadati</taxon>
        <taxon>Pseudomonadota</taxon>
        <taxon>Gammaproteobacteria</taxon>
        <taxon>Chromatiales</taxon>
        <taxon>Ectothiorhodospiraceae</taxon>
        <taxon>Thioalkalivibrio</taxon>
    </lineage>
</organism>
<comment type="function">
    <text evidence="1">Displays ATPase and GTPase activities.</text>
</comment>
<comment type="similarity">
    <text evidence="1">Belongs to the RapZ-like family.</text>
</comment>
<name>Y722_THISH</name>
<protein>
    <recommendedName>
        <fullName evidence="1">Nucleotide-binding protein Tgr7_0722</fullName>
    </recommendedName>
</protein>
<keyword id="KW-0067">ATP-binding</keyword>
<keyword id="KW-0342">GTP-binding</keyword>
<keyword id="KW-0547">Nucleotide-binding</keyword>
<keyword id="KW-1185">Reference proteome</keyword>
<sequence length="286" mass="32358">MKLIIVSGLSGSGKSVALNALEDAGYYCVDNLHLGLLSAFVRQLMAPRMPLYELAAVGVDVRSGLEELDHFDDIMAEIRAQGVEAQILFLRADEDILLRRFSETRRKHPLARKGMPLVEALRLERSLLARIAVRADLTLDTTRTNVHQLTHLIRDRVEQAGGDALSLLFQSFGFKHGSPVDSDFVFDVRCLPNPYWEPRLRSLTGRDPDVGAYLDEHAVVQEMFDSLRDFLERWIPCFEAEHRSYMTVSLGCTGGQHRSVYLAERLAAHFRQTRGLNVSTRHRELS</sequence>
<dbReference type="EMBL" id="CP001339">
    <property type="protein sequence ID" value="ACL71814.1"/>
    <property type="molecule type" value="Genomic_DNA"/>
</dbReference>
<dbReference type="RefSeq" id="WP_012637302.1">
    <property type="nucleotide sequence ID" value="NC_011901.1"/>
</dbReference>
<dbReference type="SMR" id="B8GMI2"/>
<dbReference type="STRING" id="396588.Tgr7_0722"/>
<dbReference type="KEGG" id="tgr:Tgr7_0722"/>
<dbReference type="eggNOG" id="COG1660">
    <property type="taxonomic scope" value="Bacteria"/>
</dbReference>
<dbReference type="HOGENOM" id="CLU_059558_1_1_6"/>
<dbReference type="OrthoDB" id="9784461at2"/>
<dbReference type="Proteomes" id="UP000002383">
    <property type="component" value="Chromosome"/>
</dbReference>
<dbReference type="GO" id="GO:0005524">
    <property type="term" value="F:ATP binding"/>
    <property type="evidence" value="ECO:0007669"/>
    <property type="project" value="UniProtKB-UniRule"/>
</dbReference>
<dbReference type="GO" id="GO:0005525">
    <property type="term" value="F:GTP binding"/>
    <property type="evidence" value="ECO:0007669"/>
    <property type="project" value="UniProtKB-UniRule"/>
</dbReference>
<dbReference type="Gene3D" id="3.40.50.300">
    <property type="entry name" value="P-loop containing nucleotide triphosphate hydrolases"/>
    <property type="match status" value="1"/>
</dbReference>
<dbReference type="HAMAP" id="MF_00636">
    <property type="entry name" value="RapZ_like"/>
    <property type="match status" value="1"/>
</dbReference>
<dbReference type="InterPro" id="IPR027417">
    <property type="entry name" value="P-loop_NTPase"/>
</dbReference>
<dbReference type="InterPro" id="IPR005337">
    <property type="entry name" value="RapZ-like"/>
</dbReference>
<dbReference type="InterPro" id="IPR053930">
    <property type="entry name" value="RapZ-like_N"/>
</dbReference>
<dbReference type="InterPro" id="IPR053931">
    <property type="entry name" value="RapZ_C"/>
</dbReference>
<dbReference type="NCBIfam" id="NF003828">
    <property type="entry name" value="PRK05416.1"/>
    <property type="match status" value="1"/>
</dbReference>
<dbReference type="PANTHER" id="PTHR30448">
    <property type="entry name" value="RNASE ADAPTER PROTEIN RAPZ"/>
    <property type="match status" value="1"/>
</dbReference>
<dbReference type="PANTHER" id="PTHR30448:SF0">
    <property type="entry name" value="RNASE ADAPTER PROTEIN RAPZ"/>
    <property type="match status" value="1"/>
</dbReference>
<dbReference type="Pfam" id="PF22740">
    <property type="entry name" value="PapZ_C"/>
    <property type="match status" value="1"/>
</dbReference>
<dbReference type="Pfam" id="PF03668">
    <property type="entry name" value="RapZ-like_N"/>
    <property type="match status" value="1"/>
</dbReference>
<dbReference type="PIRSF" id="PIRSF005052">
    <property type="entry name" value="P-loopkin"/>
    <property type="match status" value="1"/>
</dbReference>
<dbReference type="SUPFAM" id="SSF52540">
    <property type="entry name" value="P-loop containing nucleoside triphosphate hydrolases"/>
    <property type="match status" value="1"/>
</dbReference>
<accession>B8GMI2</accession>
<feature type="chain" id="PRO_1000147376" description="Nucleotide-binding protein Tgr7_0722">
    <location>
        <begin position="1"/>
        <end position="286"/>
    </location>
</feature>
<feature type="binding site" evidence="1">
    <location>
        <begin position="8"/>
        <end position="15"/>
    </location>
    <ligand>
        <name>ATP</name>
        <dbReference type="ChEBI" id="CHEBI:30616"/>
    </ligand>
</feature>
<feature type="binding site" evidence="1">
    <location>
        <begin position="60"/>
        <end position="63"/>
    </location>
    <ligand>
        <name>GTP</name>
        <dbReference type="ChEBI" id="CHEBI:37565"/>
    </ligand>
</feature>
<evidence type="ECO:0000255" key="1">
    <source>
        <dbReference type="HAMAP-Rule" id="MF_00636"/>
    </source>
</evidence>
<reference key="1">
    <citation type="journal article" date="2011" name="Stand. Genomic Sci.">
        <title>Complete genome sequence of 'Thioalkalivibrio sulfidophilus' HL-EbGr7.</title>
        <authorList>
            <person name="Muyzer G."/>
            <person name="Sorokin D.Y."/>
            <person name="Mavromatis K."/>
            <person name="Lapidus A."/>
            <person name="Clum A."/>
            <person name="Ivanova N."/>
            <person name="Pati A."/>
            <person name="d'Haeseleer P."/>
            <person name="Woyke T."/>
            <person name="Kyrpides N.C."/>
        </authorList>
    </citation>
    <scope>NUCLEOTIDE SEQUENCE [LARGE SCALE GENOMIC DNA]</scope>
    <source>
        <strain>HL-EbGR7</strain>
    </source>
</reference>